<accession>P59852</accession>
<name>LAGD_LACLL</name>
<proteinExistence type="evidence at protein level"/>
<feature type="chain" id="PRO_0000092397" description="Lactococcin-G-processing and transport ATP-binding protein LagD">
    <location>
        <begin position="1"/>
        <end position="703"/>
    </location>
</feature>
<feature type="transmembrane region" description="Helical" evidence="4">
    <location>
        <begin position="162"/>
        <end position="182"/>
    </location>
</feature>
<feature type="transmembrane region" description="Helical" evidence="4">
    <location>
        <begin position="189"/>
        <end position="209"/>
    </location>
</feature>
<feature type="transmembrane region" description="Helical" evidence="4">
    <location>
        <begin position="224"/>
        <end position="244"/>
    </location>
</feature>
<feature type="transmembrane region" description="Helical" evidence="4">
    <location>
        <begin position="267"/>
        <end position="287"/>
    </location>
</feature>
<feature type="transmembrane region" description="Helical" evidence="4">
    <location>
        <begin position="291"/>
        <end position="311"/>
    </location>
</feature>
<feature type="transmembrane region" description="Helical" evidence="4">
    <location>
        <begin position="381"/>
        <end position="401"/>
    </location>
</feature>
<feature type="transmembrane region" description="Helical" evidence="4">
    <location>
        <begin position="409"/>
        <end position="429"/>
    </location>
</feature>
<feature type="domain" description="Peptidase C39" evidence="2">
    <location>
        <begin position="7"/>
        <end position="132"/>
    </location>
</feature>
<feature type="domain" description="ABC transmembrane type-1" evidence="4">
    <location>
        <begin position="153"/>
        <end position="435"/>
    </location>
</feature>
<feature type="domain" description="ABC transporter" evidence="2 3">
    <location>
        <begin position="469"/>
        <end position="703"/>
    </location>
</feature>
<feature type="active site">
    <location>
        <position position="13"/>
    </location>
</feature>
<feature type="binding site" evidence="2 3">
    <location>
        <begin position="502"/>
        <end position="509"/>
    </location>
    <ligand>
        <name>ATP</name>
        <dbReference type="ChEBI" id="CHEBI:30616"/>
    </ligand>
</feature>
<feature type="mutagenesis site" description="Complete loss of precursor processing." evidence="5">
    <original>C</original>
    <variation>A</variation>
    <location>
        <position position="13"/>
    </location>
</feature>
<feature type="mutagenesis site" description="5-fold reduction of precursor processing." evidence="5">
    <original>V</original>
    <variation>M</variation>
    <location>
        <position position="95"/>
    </location>
</feature>
<dbReference type="EC" id="3.4.22.-"/>
<dbReference type="EC" id="7.-.-.-"/>
<dbReference type="SMR" id="P59852"/>
<dbReference type="MEROPS" id="C39.001"/>
<dbReference type="GO" id="GO:0005886">
    <property type="term" value="C:plasma membrane"/>
    <property type="evidence" value="ECO:0007669"/>
    <property type="project" value="UniProtKB-SubCell"/>
</dbReference>
<dbReference type="GO" id="GO:0043214">
    <property type="term" value="F:ABC-type bacteriocin transporter activity"/>
    <property type="evidence" value="ECO:0007669"/>
    <property type="project" value="InterPro"/>
</dbReference>
<dbReference type="GO" id="GO:0005524">
    <property type="term" value="F:ATP binding"/>
    <property type="evidence" value="ECO:0007669"/>
    <property type="project" value="UniProtKB-KW"/>
</dbReference>
<dbReference type="GO" id="GO:0016887">
    <property type="term" value="F:ATP hydrolysis activity"/>
    <property type="evidence" value="ECO:0007669"/>
    <property type="project" value="InterPro"/>
</dbReference>
<dbReference type="GO" id="GO:0034040">
    <property type="term" value="F:ATPase-coupled lipid transmembrane transporter activity"/>
    <property type="evidence" value="ECO:0007669"/>
    <property type="project" value="TreeGrafter"/>
</dbReference>
<dbReference type="GO" id="GO:0008234">
    <property type="term" value="F:cysteine-type peptidase activity"/>
    <property type="evidence" value="ECO:0007669"/>
    <property type="project" value="UniProtKB-KW"/>
</dbReference>
<dbReference type="GO" id="GO:0017000">
    <property type="term" value="P:antibiotic biosynthetic process"/>
    <property type="evidence" value="ECO:0007669"/>
    <property type="project" value="UniProtKB-KW"/>
</dbReference>
<dbReference type="GO" id="GO:0015031">
    <property type="term" value="P:protein transport"/>
    <property type="evidence" value="ECO:0007669"/>
    <property type="project" value="UniProtKB-KW"/>
</dbReference>
<dbReference type="GO" id="GO:0006508">
    <property type="term" value="P:proteolysis"/>
    <property type="evidence" value="ECO:0007669"/>
    <property type="project" value="UniProtKB-KW"/>
</dbReference>
<dbReference type="CDD" id="cd18570">
    <property type="entry name" value="ABC_6TM_PCAT1_LagD_like"/>
    <property type="match status" value="1"/>
</dbReference>
<dbReference type="CDD" id="cd02418">
    <property type="entry name" value="Peptidase_C39B"/>
    <property type="match status" value="1"/>
</dbReference>
<dbReference type="FunFam" id="3.40.50.300:FF:000299">
    <property type="entry name" value="ABC transporter ATP-binding protein/permease"/>
    <property type="match status" value="1"/>
</dbReference>
<dbReference type="Gene3D" id="1.20.1560.10">
    <property type="entry name" value="ABC transporter type 1, transmembrane domain"/>
    <property type="match status" value="1"/>
</dbReference>
<dbReference type="Gene3D" id="3.90.70.10">
    <property type="entry name" value="Cysteine proteinases"/>
    <property type="match status" value="1"/>
</dbReference>
<dbReference type="Gene3D" id="3.40.50.300">
    <property type="entry name" value="P-loop containing nucleotide triphosphate hydrolases"/>
    <property type="match status" value="1"/>
</dbReference>
<dbReference type="InterPro" id="IPR003593">
    <property type="entry name" value="AAA+_ATPase"/>
</dbReference>
<dbReference type="InterPro" id="IPR011527">
    <property type="entry name" value="ABC1_TM_dom"/>
</dbReference>
<dbReference type="InterPro" id="IPR036640">
    <property type="entry name" value="ABC1_TM_sf"/>
</dbReference>
<dbReference type="InterPro" id="IPR003439">
    <property type="entry name" value="ABC_transporter-like_ATP-bd"/>
</dbReference>
<dbReference type="InterPro" id="IPR017871">
    <property type="entry name" value="ABC_transporter-like_CS"/>
</dbReference>
<dbReference type="InterPro" id="IPR027417">
    <property type="entry name" value="P-loop_NTPase"/>
</dbReference>
<dbReference type="InterPro" id="IPR005897">
    <property type="entry name" value="Pept_C39_ABC_bacteriocin"/>
</dbReference>
<dbReference type="InterPro" id="IPR005074">
    <property type="entry name" value="Peptidase_C39"/>
</dbReference>
<dbReference type="InterPro" id="IPR039421">
    <property type="entry name" value="Type_1_exporter"/>
</dbReference>
<dbReference type="NCBIfam" id="TIGR01193">
    <property type="entry name" value="bacteriocin_ABC"/>
    <property type="match status" value="1"/>
</dbReference>
<dbReference type="PANTHER" id="PTHR24221">
    <property type="entry name" value="ATP-BINDING CASSETTE SUB-FAMILY B"/>
    <property type="match status" value="1"/>
</dbReference>
<dbReference type="PANTHER" id="PTHR24221:SF654">
    <property type="entry name" value="ATP-BINDING CASSETTE SUB-FAMILY B MEMBER 6"/>
    <property type="match status" value="1"/>
</dbReference>
<dbReference type="Pfam" id="PF00664">
    <property type="entry name" value="ABC_membrane"/>
    <property type="match status" value="1"/>
</dbReference>
<dbReference type="Pfam" id="PF00005">
    <property type="entry name" value="ABC_tran"/>
    <property type="match status" value="1"/>
</dbReference>
<dbReference type="Pfam" id="PF03412">
    <property type="entry name" value="Peptidase_C39"/>
    <property type="match status" value="1"/>
</dbReference>
<dbReference type="SMART" id="SM00382">
    <property type="entry name" value="AAA"/>
    <property type="match status" value="1"/>
</dbReference>
<dbReference type="SUPFAM" id="SSF90123">
    <property type="entry name" value="ABC transporter transmembrane region"/>
    <property type="match status" value="1"/>
</dbReference>
<dbReference type="SUPFAM" id="SSF52540">
    <property type="entry name" value="P-loop containing nucleoside triphosphate hydrolases"/>
    <property type="match status" value="1"/>
</dbReference>
<dbReference type="PROSITE" id="PS50929">
    <property type="entry name" value="ABC_TM1F"/>
    <property type="match status" value="1"/>
</dbReference>
<dbReference type="PROSITE" id="PS00211">
    <property type="entry name" value="ABC_TRANSPORTER_1"/>
    <property type="match status" value="1"/>
</dbReference>
<dbReference type="PROSITE" id="PS50893">
    <property type="entry name" value="ABC_TRANSPORTER_2"/>
    <property type="match status" value="1"/>
</dbReference>
<dbReference type="PROSITE" id="PS50990">
    <property type="entry name" value="PEPTIDASE_C39"/>
    <property type="match status" value="1"/>
</dbReference>
<protein>
    <recommendedName>
        <fullName>Lactococcin-G-processing and transport ATP-binding protein LagD</fullName>
        <ecNumber>3.4.22.-</ecNumber>
        <ecNumber>7.-.-.-</ecNumber>
    </recommendedName>
</protein>
<keyword id="KW-0045">Antibiotic biosynthesis</keyword>
<keyword id="KW-0067">ATP-binding</keyword>
<keyword id="KW-0080">Bacteriocin transport</keyword>
<keyword id="KW-1003">Cell membrane</keyword>
<keyword id="KW-0378">Hydrolase</keyword>
<keyword id="KW-0472">Membrane</keyword>
<keyword id="KW-0547">Nucleotide-binding</keyword>
<keyword id="KW-0645">Protease</keyword>
<keyword id="KW-0653">Protein transport</keyword>
<keyword id="KW-0788">Thiol protease</keyword>
<keyword id="KW-1278">Translocase</keyword>
<keyword id="KW-0812">Transmembrane</keyword>
<keyword id="KW-1133">Transmembrane helix</keyword>
<keyword id="KW-0813">Transport</keyword>
<evidence type="ECO:0000250" key="1"/>
<evidence type="ECO:0000255" key="2">
    <source>
        <dbReference type="PROSITE-ProRule" id="PRU00362"/>
    </source>
</evidence>
<evidence type="ECO:0000255" key="3">
    <source>
        <dbReference type="PROSITE-ProRule" id="PRU00434"/>
    </source>
</evidence>
<evidence type="ECO:0000255" key="4">
    <source>
        <dbReference type="PROSITE-ProRule" id="PRU00441"/>
    </source>
</evidence>
<evidence type="ECO:0000269" key="5">
    <source>
    </source>
</evidence>
<evidence type="ECO:0000305" key="6"/>
<comment type="function">
    <text>LagD (TC 3.A.1) is involved in processing the signal peptide and probably also in export of the bacteriocin lactococcin G.</text>
</comment>
<comment type="subunit">
    <text evidence="1">Homodimer.</text>
</comment>
<comment type="subcellular location">
    <subcellularLocation>
        <location evidence="6">Cell membrane</location>
        <topology evidence="6">Multi-pass membrane protein</topology>
    </subcellularLocation>
</comment>
<comment type="domain">
    <text>The first 150 amino acids are capable of cleaving the signal sequence of LagA, the lactococcin G alpha precursor.</text>
</comment>
<comment type="similarity">
    <text evidence="6">Belongs to the ABC transporter superfamily. LagD family.</text>
</comment>
<organism>
    <name type="scientific">Lactococcus lactis subsp. lactis</name>
    <name type="common">Streptococcus lactis</name>
    <dbReference type="NCBI Taxonomy" id="1360"/>
    <lineage>
        <taxon>Bacteria</taxon>
        <taxon>Bacillati</taxon>
        <taxon>Bacillota</taxon>
        <taxon>Bacilli</taxon>
        <taxon>Lactobacillales</taxon>
        <taxon>Streptococcaceae</taxon>
        <taxon>Lactococcus</taxon>
    </lineage>
</organism>
<reference key="1">
    <citation type="journal article" date="1995" name="Mol. Microbiol.">
        <title>A family of bacteriocin ABC transporters carry out proteolytic processing of their substrates concomitant with export.</title>
        <authorList>
            <person name="Havarstein L.S."/>
            <person name="Diep D.B."/>
            <person name="Nes I.F."/>
        </authorList>
    </citation>
    <scope>NUCLEOTIDE SEQUENCE [GENOMIC DNA]</scope>
    <scope>IDENTIFICATION OF PROTEOLYTIC ACTIVITY</scope>
    <scope>MUTAGENESIS</scope>
    <source>
        <strain>LMG 2081</strain>
    </source>
</reference>
<gene>
    <name type="primary">lagD</name>
</gene>
<sequence>MKKIIYQQDEKDCGVACIAMILKHYGTEITIQRLRELSGTDLDGTSAFGIKKTFEKLGFDAPAFKAGDETWQEKDIPLPLIAHIISEQKYQHYVVVYKVKGDEIWIADPAKGKIRKTISEFSKEWTGVLLFPKPKAEYKPSIERVDSLSTFFPILIKQKSLFITIFGIISSYYFQGLLDNIIPNQARSTLNILSIGLIFVYLFRVLFEYSRSYLLLLIGQRMSMSIMLGYFKHVLSLPLSFFATRKSGEIISRFLDANKIIDALASATLSLILDIGMVILVGTTLAIQSTQLFLLTLAFLPFYILVVYVFIRSYDKANTEEMSAGAEVNSSIIESLKGIETIKSYNGENHVYDRVDSEFVTLMKKSFKSVTLDNVQQSLKMVIELISSVLILWLGSSYVIDGKISLGQLITYNALLVFFTEPLQNIINLQVKMQKARVANKRLNEIMSISPEQRNTNINISKNIFNKDIKLDKVSFSYNMKLPVLRDVSLEIYSKSKVALVGVSGSGKSTLAKLLVKFYDPSEGNITYGDINCQDIENHKLRNHVTYVPQESFFFNGTIIDNLTFGLSHQPEFEKIFRACKAACLVDFINQQPLRFDSVLEEGGNNLSGGQKQRLAIARAILNDSEIIIFDEATSGLDTLLEKEILEYLIKLQDKTIIFIAHHLSIAKACDEIIVLDQGILVGRGTHEELSEKEGVYRRLLNA</sequence>